<sequence>MQILLANPRGFCAGVDRAISIVENALAIYGAPIYVRHEVVHNRYVVDSLRERGAIFIEQISEVPDGAILIFSAHGVSQAVRNEAKSRDLTVFDATCPLVTKVHMEVARASRRGEESILIGHAGHPEVEGTMGQYSNPEGGMYLVESPDDVWKLTVKNEEKLSFMTQTTLSVDDTSDVIDALRKRFPKIVGPRKDDICYATTNRQEAVRALAEQAEVVLVVGSKNSSNSNRLAELAQRMGKRAFLIDDATDIQEEWVKEAKCVGVTAGASAPDILVQNVVARLQQLGGGEAIPLEGREENIVFEVPKELRVDIREVD</sequence>
<dbReference type="EC" id="1.17.7.4" evidence="1"/>
<dbReference type="EMBL" id="CU928161">
    <property type="protein sequence ID" value="CAR01395.1"/>
    <property type="molecule type" value="Genomic_DNA"/>
</dbReference>
<dbReference type="RefSeq" id="WP_001166403.1">
    <property type="nucleotide sequence ID" value="NC_011742.1"/>
</dbReference>
<dbReference type="SMR" id="B7MAE9"/>
<dbReference type="KEGG" id="ecz:ECS88_0028"/>
<dbReference type="HOGENOM" id="CLU_027486_1_0_6"/>
<dbReference type="UniPathway" id="UPA00056">
    <property type="reaction ID" value="UER00097"/>
</dbReference>
<dbReference type="UniPathway" id="UPA00059">
    <property type="reaction ID" value="UER00105"/>
</dbReference>
<dbReference type="Proteomes" id="UP000000747">
    <property type="component" value="Chromosome"/>
</dbReference>
<dbReference type="GO" id="GO:0051539">
    <property type="term" value="F:4 iron, 4 sulfur cluster binding"/>
    <property type="evidence" value="ECO:0007669"/>
    <property type="project" value="UniProtKB-UniRule"/>
</dbReference>
<dbReference type="GO" id="GO:0051745">
    <property type="term" value="F:4-hydroxy-3-methylbut-2-enyl diphosphate reductase activity"/>
    <property type="evidence" value="ECO:0007669"/>
    <property type="project" value="UniProtKB-UniRule"/>
</dbReference>
<dbReference type="GO" id="GO:0046872">
    <property type="term" value="F:metal ion binding"/>
    <property type="evidence" value="ECO:0007669"/>
    <property type="project" value="UniProtKB-KW"/>
</dbReference>
<dbReference type="GO" id="GO:0050992">
    <property type="term" value="P:dimethylallyl diphosphate biosynthetic process"/>
    <property type="evidence" value="ECO:0007669"/>
    <property type="project" value="UniProtKB-UniRule"/>
</dbReference>
<dbReference type="GO" id="GO:0019288">
    <property type="term" value="P:isopentenyl diphosphate biosynthetic process, methylerythritol 4-phosphate pathway"/>
    <property type="evidence" value="ECO:0007669"/>
    <property type="project" value="UniProtKB-UniRule"/>
</dbReference>
<dbReference type="GO" id="GO:0016114">
    <property type="term" value="P:terpenoid biosynthetic process"/>
    <property type="evidence" value="ECO:0007669"/>
    <property type="project" value="UniProtKB-UniRule"/>
</dbReference>
<dbReference type="CDD" id="cd13944">
    <property type="entry name" value="lytB_ispH"/>
    <property type="match status" value="1"/>
</dbReference>
<dbReference type="FunFam" id="3.40.1010.20:FF:000001">
    <property type="entry name" value="4-hydroxy-3-methylbut-2-enyl diphosphate reductase"/>
    <property type="match status" value="1"/>
</dbReference>
<dbReference type="FunFam" id="3.40.50.11270:FF:000001">
    <property type="entry name" value="4-hydroxy-3-methylbut-2-enyl diphosphate reductase"/>
    <property type="match status" value="1"/>
</dbReference>
<dbReference type="Gene3D" id="3.40.50.11270">
    <property type="match status" value="1"/>
</dbReference>
<dbReference type="Gene3D" id="3.40.1010.20">
    <property type="entry name" value="4-hydroxy-3-methylbut-2-enyl diphosphate reductase, catalytic domain"/>
    <property type="match status" value="2"/>
</dbReference>
<dbReference type="HAMAP" id="MF_00191">
    <property type="entry name" value="IspH"/>
    <property type="match status" value="1"/>
</dbReference>
<dbReference type="InterPro" id="IPR003451">
    <property type="entry name" value="LytB/IspH"/>
</dbReference>
<dbReference type="NCBIfam" id="TIGR00216">
    <property type="entry name" value="ispH_lytB"/>
    <property type="match status" value="1"/>
</dbReference>
<dbReference type="NCBIfam" id="NF002188">
    <property type="entry name" value="PRK01045.1-2"/>
    <property type="match status" value="1"/>
</dbReference>
<dbReference type="NCBIfam" id="NF002190">
    <property type="entry name" value="PRK01045.1-4"/>
    <property type="match status" value="1"/>
</dbReference>
<dbReference type="PANTHER" id="PTHR30426">
    <property type="entry name" value="4-HYDROXY-3-METHYLBUT-2-ENYL DIPHOSPHATE REDUCTASE"/>
    <property type="match status" value="1"/>
</dbReference>
<dbReference type="PANTHER" id="PTHR30426:SF0">
    <property type="entry name" value="4-HYDROXY-3-METHYLBUT-2-ENYL DIPHOSPHATE REDUCTASE"/>
    <property type="match status" value="1"/>
</dbReference>
<dbReference type="Pfam" id="PF02401">
    <property type="entry name" value="LYTB"/>
    <property type="match status" value="1"/>
</dbReference>
<name>ISPH_ECO45</name>
<proteinExistence type="inferred from homology"/>
<feature type="chain" id="PRO_1000118606" description="4-hydroxy-3-methylbut-2-enyl diphosphate reductase">
    <location>
        <begin position="1"/>
        <end position="316"/>
    </location>
</feature>
<feature type="active site" description="Proton donor" evidence="1">
    <location>
        <position position="126"/>
    </location>
</feature>
<feature type="binding site" evidence="1">
    <location>
        <position position="12"/>
    </location>
    <ligand>
        <name>[4Fe-4S] cluster</name>
        <dbReference type="ChEBI" id="CHEBI:49883"/>
    </ligand>
</feature>
<feature type="binding site" evidence="1">
    <location>
        <position position="41"/>
    </location>
    <ligand>
        <name>(2E)-4-hydroxy-3-methylbut-2-enyl diphosphate</name>
        <dbReference type="ChEBI" id="CHEBI:128753"/>
    </ligand>
</feature>
<feature type="binding site" evidence="1">
    <location>
        <position position="41"/>
    </location>
    <ligand>
        <name>dimethylallyl diphosphate</name>
        <dbReference type="ChEBI" id="CHEBI:57623"/>
    </ligand>
</feature>
<feature type="binding site" evidence="1">
    <location>
        <position position="41"/>
    </location>
    <ligand>
        <name>isopentenyl diphosphate</name>
        <dbReference type="ChEBI" id="CHEBI:128769"/>
    </ligand>
</feature>
<feature type="binding site" evidence="1">
    <location>
        <position position="74"/>
    </location>
    <ligand>
        <name>(2E)-4-hydroxy-3-methylbut-2-enyl diphosphate</name>
        <dbReference type="ChEBI" id="CHEBI:128753"/>
    </ligand>
</feature>
<feature type="binding site" evidence="1">
    <location>
        <position position="74"/>
    </location>
    <ligand>
        <name>dimethylallyl diphosphate</name>
        <dbReference type="ChEBI" id="CHEBI:57623"/>
    </ligand>
</feature>
<feature type="binding site" evidence="1">
    <location>
        <position position="74"/>
    </location>
    <ligand>
        <name>isopentenyl diphosphate</name>
        <dbReference type="ChEBI" id="CHEBI:128769"/>
    </ligand>
</feature>
<feature type="binding site" evidence="1">
    <location>
        <position position="96"/>
    </location>
    <ligand>
        <name>[4Fe-4S] cluster</name>
        <dbReference type="ChEBI" id="CHEBI:49883"/>
    </ligand>
</feature>
<feature type="binding site" evidence="1">
    <location>
        <position position="124"/>
    </location>
    <ligand>
        <name>(2E)-4-hydroxy-3-methylbut-2-enyl diphosphate</name>
        <dbReference type="ChEBI" id="CHEBI:128753"/>
    </ligand>
</feature>
<feature type="binding site" evidence="1">
    <location>
        <position position="124"/>
    </location>
    <ligand>
        <name>dimethylallyl diphosphate</name>
        <dbReference type="ChEBI" id="CHEBI:57623"/>
    </ligand>
</feature>
<feature type="binding site" evidence="1">
    <location>
        <position position="124"/>
    </location>
    <ligand>
        <name>isopentenyl diphosphate</name>
        <dbReference type="ChEBI" id="CHEBI:128769"/>
    </ligand>
</feature>
<feature type="binding site" evidence="1">
    <location>
        <position position="167"/>
    </location>
    <ligand>
        <name>(2E)-4-hydroxy-3-methylbut-2-enyl diphosphate</name>
        <dbReference type="ChEBI" id="CHEBI:128753"/>
    </ligand>
</feature>
<feature type="binding site" evidence="1">
    <location>
        <position position="197"/>
    </location>
    <ligand>
        <name>[4Fe-4S] cluster</name>
        <dbReference type="ChEBI" id="CHEBI:49883"/>
    </ligand>
</feature>
<feature type="binding site" evidence="1">
    <location>
        <position position="225"/>
    </location>
    <ligand>
        <name>(2E)-4-hydroxy-3-methylbut-2-enyl diphosphate</name>
        <dbReference type="ChEBI" id="CHEBI:128753"/>
    </ligand>
</feature>
<feature type="binding site" evidence="1">
    <location>
        <position position="225"/>
    </location>
    <ligand>
        <name>dimethylallyl diphosphate</name>
        <dbReference type="ChEBI" id="CHEBI:57623"/>
    </ligand>
</feature>
<feature type="binding site" evidence="1">
    <location>
        <position position="225"/>
    </location>
    <ligand>
        <name>isopentenyl diphosphate</name>
        <dbReference type="ChEBI" id="CHEBI:128769"/>
    </ligand>
</feature>
<feature type="binding site" evidence="1">
    <location>
        <position position="226"/>
    </location>
    <ligand>
        <name>(2E)-4-hydroxy-3-methylbut-2-enyl diphosphate</name>
        <dbReference type="ChEBI" id="CHEBI:128753"/>
    </ligand>
</feature>
<feature type="binding site" evidence="1">
    <location>
        <position position="226"/>
    </location>
    <ligand>
        <name>dimethylallyl diphosphate</name>
        <dbReference type="ChEBI" id="CHEBI:57623"/>
    </ligand>
</feature>
<feature type="binding site" evidence="1">
    <location>
        <position position="226"/>
    </location>
    <ligand>
        <name>isopentenyl diphosphate</name>
        <dbReference type="ChEBI" id="CHEBI:128769"/>
    </ligand>
</feature>
<feature type="binding site" evidence="1">
    <location>
        <position position="227"/>
    </location>
    <ligand>
        <name>(2E)-4-hydroxy-3-methylbut-2-enyl diphosphate</name>
        <dbReference type="ChEBI" id="CHEBI:128753"/>
    </ligand>
</feature>
<feature type="binding site" evidence="1">
    <location>
        <position position="227"/>
    </location>
    <ligand>
        <name>dimethylallyl diphosphate</name>
        <dbReference type="ChEBI" id="CHEBI:57623"/>
    </ligand>
</feature>
<feature type="binding site" evidence="1">
    <location>
        <position position="227"/>
    </location>
    <ligand>
        <name>isopentenyl diphosphate</name>
        <dbReference type="ChEBI" id="CHEBI:128769"/>
    </ligand>
</feature>
<feature type="binding site" evidence="1">
    <location>
        <position position="269"/>
    </location>
    <ligand>
        <name>(2E)-4-hydroxy-3-methylbut-2-enyl diphosphate</name>
        <dbReference type="ChEBI" id="CHEBI:128753"/>
    </ligand>
</feature>
<feature type="binding site" evidence="1">
    <location>
        <position position="269"/>
    </location>
    <ligand>
        <name>dimethylallyl diphosphate</name>
        <dbReference type="ChEBI" id="CHEBI:57623"/>
    </ligand>
</feature>
<feature type="binding site" evidence="1">
    <location>
        <position position="269"/>
    </location>
    <ligand>
        <name>isopentenyl diphosphate</name>
        <dbReference type="ChEBI" id="CHEBI:128769"/>
    </ligand>
</feature>
<gene>
    <name evidence="1" type="primary">ispH</name>
    <name type="ordered locus">ECS88_0028</name>
</gene>
<evidence type="ECO:0000255" key="1">
    <source>
        <dbReference type="HAMAP-Rule" id="MF_00191"/>
    </source>
</evidence>
<reference key="1">
    <citation type="journal article" date="2009" name="PLoS Genet.">
        <title>Organised genome dynamics in the Escherichia coli species results in highly diverse adaptive paths.</title>
        <authorList>
            <person name="Touchon M."/>
            <person name="Hoede C."/>
            <person name="Tenaillon O."/>
            <person name="Barbe V."/>
            <person name="Baeriswyl S."/>
            <person name="Bidet P."/>
            <person name="Bingen E."/>
            <person name="Bonacorsi S."/>
            <person name="Bouchier C."/>
            <person name="Bouvet O."/>
            <person name="Calteau A."/>
            <person name="Chiapello H."/>
            <person name="Clermont O."/>
            <person name="Cruveiller S."/>
            <person name="Danchin A."/>
            <person name="Diard M."/>
            <person name="Dossat C."/>
            <person name="Karoui M.E."/>
            <person name="Frapy E."/>
            <person name="Garry L."/>
            <person name="Ghigo J.M."/>
            <person name="Gilles A.M."/>
            <person name="Johnson J."/>
            <person name="Le Bouguenec C."/>
            <person name="Lescat M."/>
            <person name="Mangenot S."/>
            <person name="Martinez-Jehanne V."/>
            <person name="Matic I."/>
            <person name="Nassif X."/>
            <person name="Oztas S."/>
            <person name="Petit M.A."/>
            <person name="Pichon C."/>
            <person name="Rouy Z."/>
            <person name="Ruf C.S."/>
            <person name="Schneider D."/>
            <person name="Tourret J."/>
            <person name="Vacherie B."/>
            <person name="Vallenet D."/>
            <person name="Medigue C."/>
            <person name="Rocha E.P.C."/>
            <person name="Denamur E."/>
        </authorList>
    </citation>
    <scope>NUCLEOTIDE SEQUENCE [LARGE SCALE GENOMIC DNA]</scope>
    <source>
        <strain>S88 / ExPEC</strain>
    </source>
</reference>
<keyword id="KW-0004">4Fe-4S</keyword>
<keyword id="KW-0408">Iron</keyword>
<keyword id="KW-0411">Iron-sulfur</keyword>
<keyword id="KW-0414">Isoprene biosynthesis</keyword>
<keyword id="KW-0479">Metal-binding</keyword>
<keyword id="KW-0560">Oxidoreductase</keyword>
<keyword id="KW-1185">Reference proteome</keyword>
<protein>
    <recommendedName>
        <fullName evidence="1">4-hydroxy-3-methylbut-2-enyl diphosphate reductase</fullName>
        <shortName evidence="1">HMBPP reductase</shortName>
        <ecNumber evidence="1">1.17.7.4</ecNumber>
    </recommendedName>
</protein>
<accession>B7MAE9</accession>
<organism>
    <name type="scientific">Escherichia coli O45:K1 (strain S88 / ExPEC)</name>
    <dbReference type="NCBI Taxonomy" id="585035"/>
    <lineage>
        <taxon>Bacteria</taxon>
        <taxon>Pseudomonadati</taxon>
        <taxon>Pseudomonadota</taxon>
        <taxon>Gammaproteobacteria</taxon>
        <taxon>Enterobacterales</taxon>
        <taxon>Enterobacteriaceae</taxon>
        <taxon>Escherichia</taxon>
    </lineage>
</organism>
<comment type="function">
    <text evidence="1">Catalyzes the conversion of 1-hydroxy-2-methyl-2-(E)-butenyl 4-diphosphate (HMBPP) into a mixture of isopentenyl diphosphate (IPP) and dimethylallyl diphosphate (DMAPP). Acts in the terminal step of the DOXP/MEP pathway for isoprenoid precursor biosynthesis.</text>
</comment>
<comment type="catalytic activity">
    <reaction evidence="1">
        <text>isopentenyl diphosphate + 2 oxidized [2Fe-2S]-[ferredoxin] + H2O = (2E)-4-hydroxy-3-methylbut-2-enyl diphosphate + 2 reduced [2Fe-2S]-[ferredoxin] + 2 H(+)</text>
        <dbReference type="Rhea" id="RHEA:24488"/>
        <dbReference type="Rhea" id="RHEA-COMP:10000"/>
        <dbReference type="Rhea" id="RHEA-COMP:10001"/>
        <dbReference type="ChEBI" id="CHEBI:15377"/>
        <dbReference type="ChEBI" id="CHEBI:15378"/>
        <dbReference type="ChEBI" id="CHEBI:33737"/>
        <dbReference type="ChEBI" id="CHEBI:33738"/>
        <dbReference type="ChEBI" id="CHEBI:128753"/>
        <dbReference type="ChEBI" id="CHEBI:128769"/>
        <dbReference type="EC" id="1.17.7.4"/>
    </reaction>
</comment>
<comment type="catalytic activity">
    <reaction evidence="1">
        <text>dimethylallyl diphosphate + 2 oxidized [2Fe-2S]-[ferredoxin] + H2O = (2E)-4-hydroxy-3-methylbut-2-enyl diphosphate + 2 reduced [2Fe-2S]-[ferredoxin] + 2 H(+)</text>
        <dbReference type="Rhea" id="RHEA:24825"/>
        <dbReference type="Rhea" id="RHEA-COMP:10000"/>
        <dbReference type="Rhea" id="RHEA-COMP:10001"/>
        <dbReference type="ChEBI" id="CHEBI:15377"/>
        <dbReference type="ChEBI" id="CHEBI:15378"/>
        <dbReference type="ChEBI" id="CHEBI:33737"/>
        <dbReference type="ChEBI" id="CHEBI:33738"/>
        <dbReference type="ChEBI" id="CHEBI:57623"/>
        <dbReference type="ChEBI" id="CHEBI:128753"/>
        <dbReference type="EC" id="1.17.7.4"/>
    </reaction>
</comment>
<comment type="cofactor">
    <cofactor evidence="1">
        <name>[4Fe-4S] cluster</name>
        <dbReference type="ChEBI" id="CHEBI:49883"/>
    </cofactor>
    <text evidence="1">Binds 1 [4Fe-4S] cluster per subunit.</text>
</comment>
<comment type="pathway">
    <text evidence="1">Isoprenoid biosynthesis; dimethylallyl diphosphate biosynthesis; dimethylallyl diphosphate from (2E)-4-hydroxy-3-methylbutenyl diphosphate: step 1/1.</text>
</comment>
<comment type="pathway">
    <text evidence="1">Isoprenoid biosynthesis; isopentenyl diphosphate biosynthesis via DXP pathway; isopentenyl diphosphate from 1-deoxy-D-xylulose 5-phosphate: step 6/6.</text>
</comment>
<comment type="subunit">
    <text evidence="1">Homodimer.</text>
</comment>
<comment type="similarity">
    <text evidence="1">Belongs to the IspH family.</text>
</comment>